<name>RL10_XANOP</name>
<comment type="function">
    <text evidence="1">Forms part of the ribosomal stalk, playing a central role in the interaction of the ribosome with GTP-bound translation factors.</text>
</comment>
<comment type="subunit">
    <text evidence="1">Part of the ribosomal stalk of the 50S ribosomal subunit. The N-terminus interacts with L11 and the large rRNA to form the base of the stalk. The C-terminus forms an elongated spine to which L12 dimers bind in a sequential fashion forming a multimeric L10(L12)X complex.</text>
</comment>
<comment type="similarity">
    <text evidence="1">Belongs to the universal ribosomal protein uL10 family.</text>
</comment>
<protein>
    <recommendedName>
        <fullName evidence="1">Large ribosomal subunit protein uL10</fullName>
    </recommendedName>
    <alternativeName>
        <fullName evidence="2">50S ribosomal protein L10</fullName>
    </alternativeName>
</protein>
<reference key="1">
    <citation type="journal article" date="2008" name="BMC Genomics">
        <title>Genome sequence and rapid evolution of the rice pathogen Xanthomonas oryzae pv. oryzae PXO99A.</title>
        <authorList>
            <person name="Salzberg S.L."/>
            <person name="Sommer D.D."/>
            <person name="Schatz M.C."/>
            <person name="Phillippy A.M."/>
            <person name="Rabinowicz P.D."/>
            <person name="Tsuge S."/>
            <person name="Furutani A."/>
            <person name="Ochiai H."/>
            <person name="Delcher A.L."/>
            <person name="Kelley D."/>
            <person name="Madupu R."/>
            <person name="Puiu D."/>
            <person name="Radune D."/>
            <person name="Shumway M."/>
            <person name="Trapnell C."/>
            <person name="Aparna G."/>
            <person name="Jha G."/>
            <person name="Pandey A."/>
            <person name="Patil P.B."/>
            <person name="Ishihara H."/>
            <person name="Meyer D.F."/>
            <person name="Szurek B."/>
            <person name="Verdier V."/>
            <person name="Koebnik R."/>
            <person name="Dow J.M."/>
            <person name="Ryan R.P."/>
            <person name="Hirata H."/>
            <person name="Tsuyumu S."/>
            <person name="Won Lee S."/>
            <person name="Seo Y.-S."/>
            <person name="Sriariyanum M."/>
            <person name="Ronald P.C."/>
            <person name="Sonti R.V."/>
            <person name="Van Sluys M.-A."/>
            <person name="Leach J.E."/>
            <person name="White F.F."/>
            <person name="Bogdanove A.J."/>
        </authorList>
    </citation>
    <scope>NUCLEOTIDE SEQUENCE [LARGE SCALE GENOMIC DNA]</scope>
    <source>
        <strain>PXO99A</strain>
    </source>
</reference>
<feature type="chain" id="PRO_1000121033" description="Large ribosomal subunit protein uL10">
    <location>
        <begin position="1"/>
        <end position="177"/>
    </location>
</feature>
<evidence type="ECO:0000255" key="1">
    <source>
        <dbReference type="HAMAP-Rule" id="MF_00362"/>
    </source>
</evidence>
<evidence type="ECO:0000305" key="2"/>
<organism>
    <name type="scientific">Xanthomonas oryzae pv. oryzae (strain PXO99A)</name>
    <dbReference type="NCBI Taxonomy" id="360094"/>
    <lineage>
        <taxon>Bacteria</taxon>
        <taxon>Pseudomonadati</taxon>
        <taxon>Pseudomonadota</taxon>
        <taxon>Gammaproteobacteria</taxon>
        <taxon>Lysobacterales</taxon>
        <taxon>Lysobacteraceae</taxon>
        <taxon>Xanthomonas</taxon>
    </lineage>
</organism>
<proteinExistence type="inferred from homology"/>
<dbReference type="EMBL" id="CP000967">
    <property type="protein sequence ID" value="ACD57876.1"/>
    <property type="molecule type" value="Genomic_DNA"/>
</dbReference>
<dbReference type="RefSeq" id="WP_011260036.1">
    <property type="nucleotide sequence ID" value="NC_010717.2"/>
</dbReference>
<dbReference type="SMR" id="B2SQP9"/>
<dbReference type="KEGG" id="xop:PXO_04532"/>
<dbReference type="eggNOG" id="COG0244">
    <property type="taxonomic scope" value="Bacteria"/>
</dbReference>
<dbReference type="HOGENOM" id="CLU_092227_0_1_6"/>
<dbReference type="Proteomes" id="UP000001740">
    <property type="component" value="Chromosome"/>
</dbReference>
<dbReference type="GO" id="GO:1990904">
    <property type="term" value="C:ribonucleoprotein complex"/>
    <property type="evidence" value="ECO:0007669"/>
    <property type="project" value="UniProtKB-KW"/>
</dbReference>
<dbReference type="GO" id="GO:0005840">
    <property type="term" value="C:ribosome"/>
    <property type="evidence" value="ECO:0007669"/>
    <property type="project" value="UniProtKB-KW"/>
</dbReference>
<dbReference type="GO" id="GO:0070180">
    <property type="term" value="F:large ribosomal subunit rRNA binding"/>
    <property type="evidence" value="ECO:0007669"/>
    <property type="project" value="UniProtKB-UniRule"/>
</dbReference>
<dbReference type="GO" id="GO:0006412">
    <property type="term" value="P:translation"/>
    <property type="evidence" value="ECO:0007669"/>
    <property type="project" value="UniProtKB-UniRule"/>
</dbReference>
<dbReference type="CDD" id="cd05797">
    <property type="entry name" value="Ribosomal_L10"/>
    <property type="match status" value="1"/>
</dbReference>
<dbReference type="FunFam" id="3.30.70.1730:FF:000001">
    <property type="entry name" value="50S ribosomal protein L10"/>
    <property type="match status" value="1"/>
</dbReference>
<dbReference type="Gene3D" id="3.30.70.1730">
    <property type="match status" value="1"/>
</dbReference>
<dbReference type="HAMAP" id="MF_00362">
    <property type="entry name" value="Ribosomal_uL10"/>
    <property type="match status" value="1"/>
</dbReference>
<dbReference type="InterPro" id="IPR001790">
    <property type="entry name" value="Ribosomal_uL10"/>
</dbReference>
<dbReference type="InterPro" id="IPR043141">
    <property type="entry name" value="Ribosomal_uL10-like_sf"/>
</dbReference>
<dbReference type="InterPro" id="IPR022973">
    <property type="entry name" value="Ribosomal_uL10_bac"/>
</dbReference>
<dbReference type="InterPro" id="IPR047865">
    <property type="entry name" value="Ribosomal_uL10_bac_type"/>
</dbReference>
<dbReference type="NCBIfam" id="NF000955">
    <property type="entry name" value="PRK00099.1-1"/>
    <property type="match status" value="1"/>
</dbReference>
<dbReference type="PANTHER" id="PTHR11560">
    <property type="entry name" value="39S RIBOSOMAL PROTEIN L10, MITOCHONDRIAL"/>
    <property type="match status" value="1"/>
</dbReference>
<dbReference type="Pfam" id="PF00466">
    <property type="entry name" value="Ribosomal_L10"/>
    <property type="match status" value="1"/>
</dbReference>
<dbReference type="SUPFAM" id="SSF160369">
    <property type="entry name" value="Ribosomal protein L10-like"/>
    <property type="match status" value="1"/>
</dbReference>
<sequence length="177" mass="18253">MALNLSQKQEVVAELADVAAKAHSLIAAEYAGTTVSQMTAMRKQARETGVFLKVVKNTLAARAVEGTDFAVAADKLVGPLLYAFSMEEPGAAGRLIKEFAKSNDKLQAKVVSIGGELFPAGHVDVLASLPTRDQALAMLARVLSEPAAMFARAVKAVGDKQGGGDAAAAAVAETAEA</sequence>
<accession>B2SQP9</accession>
<keyword id="KW-0687">Ribonucleoprotein</keyword>
<keyword id="KW-0689">Ribosomal protein</keyword>
<keyword id="KW-0694">RNA-binding</keyword>
<keyword id="KW-0699">rRNA-binding</keyword>
<gene>
    <name evidence="1" type="primary">rplJ</name>
    <name type="ordered locus">PXO_04532</name>
</gene>